<dbReference type="EMBL" id="CP000016">
    <property type="protein sequence ID" value="AAZ40733.1"/>
    <property type="molecule type" value="Genomic_DNA"/>
</dbReference>
<dbReference type="RefSeq" id="WP_011282639.1">
    <property type="nucleotide sequence ID" value="NC_007292.1"/>
</dbReference>
<dbReference type="SMR" id="Q493V3"/>
<dbReference type="STRING" id="291272.BPEN_090"/>
<dbReference type="KEGG" id="bpn:BPEN_090"/>
<dbReference type="eggNOG" id="COG0359">
    <property type="taxonomic scope" value="Bacteria"/>
</dbReference>
<dbReference type="HOGENOM" id="CLU_078938_4_1_6"/>
<dbReference type="OrthoDB" id="9788336at2"/>
<dbReference type="Proteomes" id="UP000007794">
    <property type="component" value="Chromosome"/>
</dbReference>
<dbReference type="GO" id="GO:1990904">
    <property type="term" value="C:ribonucleoprotein complex"/>
    <property type="evidence" value="ECO:0007669"/>
    <property type="project" value="UniProtKB-KW"/>
</dbReference>
<dbReference type="GO" id="GO:0005840">
    <property type="term" value="C:ribosome"/>
    <property type="evidence" value="ECO:0007669"/>
    <property type="project" value="UniProtKB-KW"/>
</dbReference>
<dbReference type="GO" id="GO:0019843">
    <property type="term" value="F:rRNA binding"/>
    <property type="evidence" value="ECO:0007669"/>
    <property type="project" value="UniProtKB-UniRule"/>
</dbReference>
<dbReference type="GO" id="GO:0003735">
    <property type="term" value="F:structural constituent of ribosome"/>
    <property type="evidence" value="ECO:0007669"/>
    <property type="project" value="InterPro"/>
</dbReference>
<dbReference type="GO" id="GO:0006412">
    <property type="term" value="P:translation"/>
    <property type="evidence" value="ECO:0007669"/>
    <property type="project" value="UniProtKB-UniRule"/>
</dbReference>
<dbReference type="Gene3D" id="3.10.430.100">
    <property type="entry name" value="Ribosomal protein L9, C-terminal domain"/>
    <property type="match status" value="1"/>
</dbReference>
<dbReference type="Gene3D" id="3.40.5.10">
    <property type="entry name" value="Ribosomal protein L9, N-terminal domain"/>
    <property type="match status" value="1"/>
</dbReference>
<dbReference type="HAMAP" id="MF_00503">
    <property type="entry name" value="Ribosomal_bL9"/>
    <property type="match status" value="1"/>
</dbReference>
<dbReference type="InterPro" id="IPR000244">
    <property type="entry name" value="Ribosomal_bL9"/>
</dbReference>
<dbReference type="InterPro" id="IPR009027">
    <property type="entry name" value="Ribosomal_bL9/RNase_H1_N"/>
</dbReference>
<dbReference type="InterPro" id="IPR020594">
    <property type="entry name" value="Ribosomal_bL9_bac/chp"/>
</dbReference>
<dbReference type="InterPro" id="IPR020069">
    <property type="entry name" value="Ribosomal_bL9_C"/>
</dbReference>
<dbReference type="InterPro" id="IPR036791">
    <property type="entry name" value="Ribosomal_bL9_C_sf"/>
</dbReference>
<dbReference type="InterPro" id="IPR020070">
    <property type="entry name" value="Ribosomal_bL9_N"/>
</dbReference>
<dbReference type="InterPro" id="IPR036935">
    <property type="entry name" value="Ribosomal_bL9_N_sf"/>
</dbReference>
<dbReference type="NCBIfam" id="TIGR00158">
    <property type="entry name" value="L9"/>
    <property type="match status" value="1"/>
</dbReference>
<dbReference type="PANTHER" id="PTHR21368">
    <property type="entry name" value="50S RIBOSOMAL PROTEIN L9"/>
    <property type="match status" value="1"/>
</dbReference>
<dbReference type="Pfam" id="PF03948">
    <property type="entry name" value="Ribosomal_L9_C"/>
    <property type="match status" value="1"/>
</dbReference>
<dbReference type="Pfam" id="PF01281">
    <property type="entry name" value="Ribosomal_L9_N"/>
    <property type="match status" value="1"/>
</dbReference>
<dbReference type="SUPFAM" id="SSF55658">
    <property type="entry name" value="L9 N-domain-like"/>
    <property type="match status" value="1"/>
</dbReference>
<dbReference type="SUPFAM" id="SSF55653">
    <property type="entry name" value="Ribosomal protein L9 C-domain"/>
    <property type="match status" value="1"/>
</dbReference>
<dbReference type="PROSITE" id="PS00651">
    <property type="entry name" value="RIBOSOMAL_L9"/>
    <property type="match status" value="1"/>
</dbReference>
<proteinExistence type="inferred from homology"/>
<accession>Q493V3</accession>
<comment type="function">
    <text evidence="1">Binds to the 23S rRNA.</text>
</comment>
<comment type="similarity">
    <text evidence="1">Belongs to the bacterial ribosomal protein bL9 family.</text>
</comment>
<reference key="1">
    <citation type="journal article" date="2005" name="Genome Res.">
        <title>Genome sequence of Blochmannia pennsylvanicus indicates parallel evolutionary trends among bacterial mutualists of insects.</title>
        <authorList>
            <person name="Degnan P.H."/>
            <person name="Lazarus A.B."/>
            <person name="Wernegreen J.J."/>
        </authorList>
    </citation>
    <scope>NUCLEOTIDE SEQUENCE [LARGE SCALE GENOMIC DNA]</scope>
    <source>
        <strain>BPEN</strain>
    </source>
</reference>
<organism>
    <name type="scientific">Blochmanniella pennsylvanica (strain BPEN)</name>
    <dbReference type="NCBI Taxonomy" id="291272"/>
    <lineage>
        <taxon>Bacteria</taxon>
        <taxon>Pseudomonadati</taxon>
        <taxon>Pseudomonadota</taxon>
        <taxon>Gammaproteobacteria</taxon>
        <taxon>Enterobacterales</taxon>
        <taxon>Enterobacteriaceae</taxon>
        <taxon>ant endosymbionts</taxon>
        <taxon>Candidatus Blochmanniella</taxon>
    </lineage>
</organism>
<evidence type="ECO:0000255" key="1">
    <source>
        <dbReference type="HAMAP-Rule" id="MF_00503"/>
    </source>
</evidence>
<evidence type="ECO:0000305" key="2"/>
<protein>
    <recommendedName>
        <fullName evidence="1">Large ribosomal subunit protein bL9</fullName>
    </recommendedName>
    <alternativeName>
        <fullName evidence="2">50S ribosomal protein L9</fullName>
    </alternativeName>
</protein>
<name>RL9_BLOPB</name>
<keyword id="KW-1185">Reference proteome</keyword>
<keyword id="KW-0687">Ribonucleoprotein</keyword>
<keyword id="KW-0689">Ribosomal protein</keyword>
<keyword id="KW-0694">RNA-binding</keyword>
<keyword id="KW-0699">rRNA-binding</keyword>
<gene>
    <name evidence="1" type="primary">rplI</name>
    <name type="ordered locus">BPEN_090</name>
</gene>
<feature type="chain" id="PRO_0000236488" description="Large ribosomal subunit protein bL9">
    <location>
        <begin position="1"/>
        <end position="153"/>
    </location>
</feature>
<sequence length="153" mass="16792">MKIILLDNIDKLGNKGSEVVVRSGYARNFLIPKSKAMLATKKNIEIFKAQQLELQSKAIEAQTQAEFCAKTINRLGSITIKAKSGVEGKLFGSIGSRDIATAITAASGFNISKSQIRLPNHDVLRTIGTYSINIHIYNDIFSKINVIILDEIV</sequence>